<gene>
    <name type="primary">blcap</name>
</gene>
<dbReference type="EMBL" id="BC088003">
    <property type="protein sequence ID" value="AAH88003.1"/>
    <property type="molecule type" value="mRNA"/>
</dbReference>
<dbReference type="RefSeq" id="NP_001011288.1">
    <property type="nucleotide sequence ID" value="NM_001011288.1"/>
</dbReference>
<dbReference type="RefSeq" id="XP_031749919.1">
    <property type="nucleotide sequence ID" value="XM_031894059.1"/>
</dbReference>
<dbReference type="FunCoup" id="Q5M8I8">
    <property type="interactions" value="638"/>
</dbReference>
<dbReference type="STRING" id="8364.ENSXETP00000025251"/>
<dbReference type="PaxDb" id="8364-ENSXETP00000054338"/>
<dbReference type="DNASU" id="496741"/>
<dbReference type="GeneID" id="496741"/>
<dbReference type="KEGG" id="xtr:496741"/>
<dbReference type="AGR" id="Xenbase:XB-GENE-964352"/>
<dbReference type="CTD" id="10904"/>
<dbReference type="Xenbase" id="XB-GENE-964352">
    <property type="gene designation" value="blcap"/>
</dbReference>
<dbReference type="eggNOG" id="KOG4489">
    <property type="taxonomic scope" value="Eukaryota"/>
</dbReference>
<dbReference type="HOGENOM" id="CLU_181908_0_0_1"/>
<dbReference type="InParanoid" id="Q5M8I8"/>
<dbReference type="OMA" id="FLLCYSC"/>
<dbReference type="OrthoDB" id="5772623at2759"/>
<dbReference type="PhylomeDB" id="Q5M8I8"/>
<dbReference type="TreeFam" id="TF313306"/>
<dbReference type="Proteomes" id="UP000008143">
    <property type="component" value="Chromosome 10"/>
</dbReference>
<dbReference type="Bgee" id="ENSXETG00000025511">
    <property type="expression patterns" value="Expressed in 2-cell stage embryo and 14 other cell types or tissues"/>
</dbReference>
<dbReference type="GO" id="GO:0005737">
    <property type="term" value="C:cytoplasm"/>
    <property type="evidence" value="ECO:0007669"/>
    <property type="project" value="UniProtKB-SubCell"/>
</dbReference>
<dbReference type="GO" id="GO:0016020">
    <property type="term" value="C:membrane"/>
    <property type="evidence" value="ECO:0007669"/>
    <property type="project" value="UniProtKB-SubCell"/>
</dbReference>
<dbReference type="GO" id="GO:0005634">
    <property type="term" value="C:nucleus"/>
    <property type="evidence" value="ECO:0007669"/>
    <property type="project" value="UniProtKB-SubCell"/>
</dbReference>
<dbReference type="InterPro" id="IPR009598">
    <property type="entry name" value="BCALP"/>
</dbReference>
<dbReference type="PANTHER" id="PTHR13259">
    <property type="entry name" value="BLADDER CANCER 10 KD PROTEIN HOMOLOG"/>
    <property type="match status" value="1"/>
</dbReference>
<dbReference type="PANTHER" id="PTHR13259:SF1">
    <property type="entry name" value="BLADDER CANCER-ASSOCIATED PROTEIN"/>
    <property type="match status" value="1"/>
</dbReference>
<dbReference type="Pfam" id="PF06726">
    <property type="entry name" value="BC10"/>
    <property type="match status" value="1"/>
</dbReference>
<dbReference type="SMART" id="SM01396">
    <property type="entry name" value="BC10"/>
    <property type="match status" value="1"/>
</dbReference>
<proteinExistence type="inferred from homology"/>
<feature type="chain" id="PRO_0000295138" description="Apoptosis inducing factor BLCAP">
    <location>
        <begin position="1"/>
        <end position="87"/>
    </location>
</feature>
<feature type="transmembrane region" description="Helical" evidence="2">
    <location>
        <begin position="19"/>
        <end position="39"/>
    </location>
</feature>
<feature type="transmembrane region" description="Helical" evidence="2">
    <location>
        <begin position="43"/>
        <end position="63"/>
    </location>
</feature>
<sequence>MYCLQWLLPVLLIPKPLNPALWFSHSVFMGFYLLSFLLERKPCTICALVFLGALFLICYSCWGNCFLYHCSASELPEAAYDPAVVGT</sequence>
<reference key="1">
    <citation type="submission" date="2004-12" db="EMBL/GenBank/DDBJ databases">
        <authorList>
            <consortium name="NIH - Xenopus Gene Collection (XGC) project"/>
        </authorList>
    </citation>
    <scope>NUCLEOTIDE SEQUENCE [LARGE SCALE MRNA]</scope>
</reference>
<comment type="function">
    <text evidence="1">Acts as a tumor suppressor; induces growth arrest at G(1)/S checkpoint and apoptosis via RB1-dependent and p53/TP53- and NF-kappa-B-independent mechanisms. Modulates expression of genes involved in the regulation of proliferation, cell cycle and apoptosis.</text>
</comment>
<comment type="subcellular location">
    <subcellularLocation>
        <location evidence="1">Cytoplasm</location>
    </subcellularLocation>
    <subcellularLocation>
        <location evidence="1">Nucleus</location>
    </subcellularLocation>
    <subcellularLocation>
        <location evidence="2">Membrane</location>
        <topology evidence="2">Multi-pass membrane protein</topology>
    </subcellularLocation>
</comment>
<comment type="similarity">
    <text evidence="3">Belongs to the BLCAP family.</text>
</comment>
<keyword id="KW-0963">Cytoplasm</keyword>
<keyword id="KW-0472">Membrane</keyword>
<keyword id="KW-0539">Nucleus</keyword>
<keyword id="KW-1185">Reference proteome</keyword>
<keyword id="KW-0812">Transmembrane</keyword>
<keyword id="KW-1133">Transmembrane helix</keyword>
<keyword id="KW-0043">Tumor suppressor</keyword>
<protein>
    <recommendedName>
        <fullName evidence="3">Apoptosis inducing factor BLCAP</fullName>
    </recommendedName>
    <alternativeName>
        <fullName>Bladder cancer-associated protein</fullName>
    </alternativeName>
</protein>
<organism>
    <name type="scientific">Xenopus tropicalis</name>
    <name type="common">Western clawed frog</name>
    <name type="synonym">Silurana tropicalis</name>
    <dbReference type="NCBI Taxonomy" id="8364"/>
    <lineage>
        <taxon>Eukaryota</taxon>
        <taxon>Metazoa</taxon>
        <taxon>Chordata</taxon>
        <taxon>Craniata</taxon>
        <taxon>Vertebrata</taxon>
        <taxon>Euteleostomi</taxon>
        <taxon>Amphibia</taxon>
        <taxon>Batrachia</taxon>
        <taxon>Anura</taxon>
        <taxon>Pipoidea</taxon>
        <taxon>Pipidae</taxon>
        <taxon>Xenopodinae</taxon>
        <taxon>Xenopus</taxon>
        <taxon>Silurana</taxon>
    </lineage>
</organism>
<evidence type="ECO:0000250" key="1">
    <source>
        <dbReference type="UniProtKB" id="P62952"/>
    </source>
</evidence>
<evidence type="ECO:0000255" key="2"/>
<evidence type="ECO:0000305" key="3"/>
<name>BLCAP_XENTR</name>
<accession>Q5M8I8</accession>